<accession>B1KFU9</accession>
<proteinExistence type="inferred from homology"/>
<keyword id="KW-0106">Calcium</keyword>
<keyword id="KW-0249">Electron transport</keyword>
<keyword id="KW-0349">Heme</keyword>
<keyword id="KW-0408">Iron</keyword>
<keyword id="KW-0479">Metal-binding</keyword>
<keyword id="KW-0560">Oxidoreductase</keyword>
<keyword id="KW-0574">Periplasm</keyword>
<keyword id="KW-1185">Reference proteome</keyword>
<keyword id="KW-0732">Signal</keyword>
<keyword id="KW-0813">Transport</keyword>
<organism>
    <name type="scientific">Shewanella woodyi (strain ATCC 51908 / MS32)</name>
    <dbReference type="NCBI Taxonomy" id="392500"/>
    <lineage>
        <taxon>Bacteria</taxon>
        <taxon>Pseudomonadati</taxon>
        <taxon>Pseudomonadota</taxon>
        <taxon>Gammaproteobacteria</taxon>
        <taxon>Alteromonadales</taxon>
        <taxon>Shewanellaceae</taxon>
        <taxon>Shewanella</taxon>
    </lineage>
</organism>
<feature type="signal peptide" evidence="1">
    <location>
        <begin position="1"/>
        <end position="27"/>
    </location>
</feature>
<feature type="chain" id="PRO_5000316547" description="Cytochrome c-552">
    <location>
        <begin position="28"/>
        <end position="466"/>
    </location>
</feature>
<feature type="binding site" description="axial binding residue" evidence="1">
    <location>
        <position position="87"/>
    </location>
    <ligand>
        <name>heme c</name>
        <dbReference type="ChEBI" id="CHEBI:61717"/>
        <label>3</label>
    </ligand>
    <ligandPart>
        <name>Fe</name>
        <dbReference type="ChEBI" id="CHEBI:18248"/>
    </ligandPart>
</feature>
<feature type="binding site" description="covalent" evidence="1">
    <location>
        <position position="115"/>
    </location>
    <ligand>
        <name>heme</name>
        <dbReference type="ChEBI" id="CHEBI:30413"/>
        <label>1</label>
    </ligand>
</feature>
<feature type="binding site" description="covalent" evidence="1">
    <location>
        <position position="118"/>
    </location>
    <ligand>
        <name>heme</name>
        <dbReference type="ChEBI" id="CHEBI:30413"/>
        <label>1</label>
    </ligand>
</feature>
<feature type="binding site" description="axial binding residue" evidence="1">
    <location>
        <position position="119"/>
    </location>
    <ligand>
        <name>heme</name>
        <dbReference type="ChEBI" id="CHEBI:30413"/>
        <label>1</label>
    </ligand>
    <ligandPart>
        <name>Fe</name>
        <dbReference type="ChEBI" id="CHEBI:18248"/>
    </ligandPart>
</feature>
<feature type="binding site" description="covalent" evidence="1">
    <location>
        <position position="153"/>
    </location>
    <ligand>
        <name>heme c</name>
        <dbReference type="ChEBI" id="CHEBI:61717"/>
        <label>2</label>
    </ligand>
</feature>
<feature type="binding site" description="covalent" evidence="1">
    <location>
        <position position="156"/>
    </location>
    <ligand>
        <name>heme c</name>
        <dbReference type="ChEBI" id="CHEBI:61717"/>
        <label>2</label>
    </ligand>
</feature>
<feature type="binding site" description="axial binding residue" evidence="1">
    <location>
        <position position="157"/>
    </location>
    <ligand>
        <name>heme c</name>
        <dbReference type="ChEBI" id="CHEBI:61717"/>
        <label>2</label>
    </ligand>
    <ligandPart>
        <name>Fe</name>
        <dbReference type="ChEBI" id="CHEBI:18248"/>
    </ligandPart>
</feature>
<feature type="binding site" description="covalent" evidence="1">
    <location>
        <position position="195"/>
    </location>
    <ligand>
        <name>heme c</name>
        <dbReference type="ChEBI" id="CHEBI:61717"/>
        <label>3</label>
    </ligand>
</feature>
<feature type="binding site" description="covalent" evidence="1">
    <location>
        <position position="198"/>
    </location>
    <ligand>
        <name>heme c</name>
        <dbReference type="ChEBI" id="CHEBI:61717"/>
        <label>3</label>
    </ligand>
</feature>
<feature type="binding site" description="axial binding residue" evidence="1">
    <location>
        <position position="199"/>
    </location>
    <ligand>
        <name>heme c</name>
        <dbReference type="ChEBI" id="CHEBI:61717"/>
        <label>3</label>
    </ligand>
    <ligandPart>
        <name>Fe</name>
        <dbReference type="ChEBI" id="CHEBI:18248"/>
    </ligandPart>
</feature>
<feature type="binding site" evidence="1">
    <location>
        <position position="201"/>
    </location>
    <ligand>
        <name>Ca(2+)</name>
        <dbReference type="ChEBI" id="CHEBI:29108"/>
    </ligand>
</feature>
<feature type="binding site" evidence="1">
    <location>
        <position position="202"/>
    </location>
    <ligand>
        <name>Ca(2+)</name>
        <dbReference type="ChEBI" id="CHEBI:29108"/>
    </ligand>
</feature>
<feature type="binding site" evidence="1">
    <location>
        <position position="202"/>
    </location>
    <ligand>
        <name>substrate</name>
    </ligand>
</feature>
<feature type="binding site" evidence="1">
    <location>
        <position position="250"/>
    </location>
    <ligand>
        <name>Ca(2+)</name>
        <dbReference type="ChEBI" id="CHEBI:29108"/>
    </ligand>
</feature>
<feature type="binding site" evidence="1">
    <location>
        <position position="252"/>
    </location>
    <ligand>
        <name>Ca(2+)</name>
        <dbReference type="ChEBI" id="CHEBI:29108"/>
    </ligand>
</feature>
<feature type="binding site" evidence="1">
    <location>
        <position position="253"/>
    </location>
    <ligand>
        <name>substrate</name>
    </ligand>
</feature>
<feature type="binding site" description="axial binding residue" evidence="1">
    <location>
        <position position="264"/>
    </location>
    <ligand>
        <name>heme c</name>
        <dbReference type="ChEBI" id="CHEBI:61717"/>
        <label>5</label>
    </ligand>
    <ligandPart>
        <name>Fe</name>
        <dbReference type="ChEBI" id="CHEBI:18248"/>
    </ligandPart>
</feature>
<feature type="binding site" description="covalent" evidence="1">
    <location>
        <position position="271"/>
    </location>
    <ligand>
        <name>heme c</name>
        <dbReference type="ChEBI" id="CHEBI:61717"/>
        <label>4</label>
    </ligand>
</feature>
<feature type="binding site" description="covalent" evidence="1">
    <location>
        <position position="274"/>
    </location>
    <ligand>
        <name>heme c</name>
        <dbReference type="ChEBI" id="CHEBI:61717"/>
        <label>4</label>
    </ligand>
</feature>
<feature type="binding site" description="axial binding residue" evidence="1">
    <location>
        <position position="275"/>
    </location>
    <ligand>
        <name>heme c</name>
        <dbReference type="ChEBI" id="CHEBI:61717"/>
        <label>4</label>
    </ligand>
    <ligandPart>
        <name>Fe</name>
        <dbReference type="ChEBI" id="CHEBI:18248"/>
    </ligandPart>
</feature>
<feature type="binding site" description="axial binding residue" evidence="1">
    <location>
        <position position="290"/>
    </location>
    <ligand>
        <name>heme c</name>
        <dbReference type="ChEBI" id="CHEBI:61717"/>
        <label>2</label>
    </ligand>
    <ligandPart>
        <name>Fe</name>
        <dbReference type="ChEBI" id="CHEBI:18248"/>
    </ligandPart>
</feature>
<feature type="binding site" description="covalent" evidence="1">
    <location>
        <position position="303"/>
    </location>
    <ligand>
        <name>heme c</name>
        <dbReference type="ChEBI" id="CHEBI:61717"/>
        <label>5</label>
    </ligand>
</feature>
<feature type="binding site" description="covalent" evidence="1">
    <location>
        <position position="306"/>
    </location>
    <ligand>
        <name>heme c</name>
        <dbReference type="ChEBI" id="CHEBI:61717"/>
        <label>5</label>
    </ligand>
</feature>
<feature type="binding site" description="axial binding residue" evidence="1">
    <location>
        <position position="307"/>
    </location>
    <ligand>
        <name>heme c</name>
        <dbReference type="ChEBI" id="CHEBI:61717"/>
        <label>5</label>
    </ligand>
    <ligandPart>
        <name>Fe</name>
        <dbReference type="ChEBI" id="CHEBI:18248"/>
    </ligandPart>
</feature>
<feature type="binding site" description="axial binding residue" evidence="1">
    <location>
        <position position="382"/>
    </location>
    <ligand>
        <name>heme c</name>
        <dbReference type="ChEBI" id="CHEBI:61717"/>
        <label>4</label>
    </ligand>
    <ligandPart>
        <name>Fe</name>
        <dbReference type="ChEBI" id="CHEBI:18248"/>
    </ligandPart>
</feature>
<protein>
    <recommendedName>
        <fullName evidence="1">Cytochrome c-552</fullName>
        <ecNumber evidence="1">1.7.2.2</ecNumber>
    </recommendedName>
    <alternativeName>
        <fullName evidence="1">Ammonia-forming cytochrome c nitrite reductase</fullName>
        <shortName evidence="1">Cytochrome c nitrite reductase</shortName>
    </alternativeName>
</protein>
<evidence type="ECO:0000255" key="1">
    <source>
        <dbReference type="HAMAP-Rule" id="MF_01182"/>
    </source>
</evidence>
<dbReference type="EC" id="1.7.2.2" evidence="1"/>
<dbReference type="EMBL" id="CP000961">
    <property type="protein sequence ID" value="ACA85265.1"/>
    <property type="molecule type" value="Genomic_DNA"/>
</dbReference>
<dbReference type="RefSeq" id="WP_012323612.1">
    <property type="nucleotide sequence ID" value="NC_010506.1"/>
</dbReference>
<dbReference type="SMR" id="B1KFU9"/>
<dbReference type="STRING" id="392500.Swoo_0972"/>
<dbReference type="KEGG" id="swd:Swoo_0972"/>
<dbReference type="eggNOG" id="COG3303">
    <property type="taxonomic scope" value="Bacteria"/>
</dbReference>
<dbReference type="HOGENOM" id="CLU_035040_1_0_6"/>
<dbReference type="UniPathway" id="UPA00653"/>
<dbReference type="Proteomes" id="UP000002168">
    <property type="component" value="Chromosome"/>
</dbReference>
<dbReference type="GO" id="GO:0030288">
    <property type="term" value="C:outer membrane-bounded periplasmic space"/>
    <property type="evidence" value="ECO:0007669"/>
    <property type="project" value="TreeGrafter"/>
</dbReference>
<dbReference type="GO" id="GO:0005509">
    <property type="term" value="F:calcium ion binding"/>
    <property type="evidence" value="ECO:0007669"/>
    <property type="project" value="UniProtKB-UniRule"/>
</dbReference>
<dbReference type="GO" id="GO:0020037">
    <property type="term" value="F:heme binding"/>
    <property type="evidence" value="ECO:0007669"/>
    <property type="project" value="InterPro"/>
</dbReference>
<dbReference type="GO" id="GO:0005506">
    <property type="term" value="F:iron ion binding"/>
    <property type="evidence" value="ECO:0007669"/>
    <property type="project" value="UniProtKB-UniRule"/>
</dbReference>
<dbReference type="GO" id="GO:0042279">
    <property type="term" value="F:nitrite reductase (cytochrome, ammonia-forming) activity"/>
    <property type="evidence" value="ECO:0007669"/>
    <property type="project" value="UniProtKB-UniRule"/>
</dbReference>
<dbReference type="GO" id="GO:0019645">
    <property type="term" value="P:anaerobic electron transport chain"/>
    <property type="evidence" value="ECO:0007669"/>
    <property type="project" value="TreeGrafter"/>
</dbReference>
<dbReference type="GO" id="GO:0042128">
    <property type="term" value="P:nitrate assimilation"/>
    <property type="evidence" value="ECO:0007669"/>
    <property type="project" value="UniProtKB-UniRule"/>
</dbReference>
<dbReference type="CDD" id="cd00548">
    <property type="entry name" value="NrfA-like"/>
    <property type="match status" value="1"/>
</dbReference>
<dbReference type="FunFam" id="1.10.1130.10:FF:000002">
    <property type="entry name" value="Cytochrome c-552"/>
    <property type="match status" value="1"/>
</dbReference>
<dbReference type="FunFam" id="1.20.140.10:FF:000014">
    <property type="entry name" value="Cytochrome c-552"/>
    <property type="match status" value="1"/>
</dbReference>
<dbReference type="Gene3D" id="1.20.140.10">
    <property type="entry name" value="Butyryl-CoA Dehydrogenase, subunit A, domain 3"/>
    <property type="match status" value="1"/>
</dbReference>
<dbReference type="Gene3D" id="1.10.1130.10">
    <property type="entry name" value="Flavocytochrome C3, Chain A"/>
    <property type="match status" value="1"/>
</dbReference>
<dbReference type="HAMAP" id="MF_01182">
    <property type="entry name" value="Cytochrom_C552"/>
    <property type="match status" value="1"/>
</dbReference>
<dbReference type="InterPro" id="IPR003321">
    <property type="entry name" value="Cyt_c552"/>
</dbReference>
<dbReference type="InterPro" id="IPR017570">
    <property type="entry name" value="Cyt_c_NO2Rdtase_formate-dep"/>
</dbReference>
<dbReference type="InterPro" id="IPR036280">
    <property type="entry name" value="Multihaem_cyt_sf"/>
</dbReference>
<dbReference type="NCBIfam" id="TIGR03152">
    <property type="entry name" value="cyto_c552_HCOOH"/>
    <property type="match status" value="1"/>
</dbReference>
<dbReference type="NCBIfam" id="NF008339">
    <property type="entry name" value="PRK11125.1"/>
    <property type="match status" value="1"/>
</dbReference>
<dbReference type="PANTHER" id="PTHR30633:SF0">
    <property type="entry name" value="CYTOCHROME C-552"/>
    <property type="match status" value="1"/>
</dbReference>
<dbReference type="PANTHER" id="PTHR30633">
    <property type="entry name" value="CYTOCHROME C-552 RESPIRATORY NITRITE REDUCTASE"/>
    <property type="match status" value="1"/>
</dbReference>
<dbReference type="Pfam" id="PF02335">
    <property type="entry name" value="Cytochrom_C552"/>
    <property type="match status" value="1"/>
</dbReference>
<dbReference type="PIRSF" id="PIRSF000243">
    <property type="entry name" value="Cyt_c552"/>
    <property type="match status" value="1"/>
</dbReference>
<dbReference type="SUPFAM" id="SSF48695">
    <property type="entry name" value="Multiheme cytochromes"/>
    <property type="match status" value="1"/>
</dbReference>
<dbReference type="PROSITE" id="PS51008">
    <property type="entry name" value="MULTIHEME_CYTC"/>
    <property type="match status" value="1"/>
</dbReference>
<name>NRFA_SHEWM</name>
<sequence>MVRILTKKSFALSALVAASLMASGAMASDKTEPRNEQYKDKFSKQYNSWHETSESVEITDALEQDPNLVILWAGYGFAKDYNKARGHMYAVTDLRNTLRTGAPKKDTDGPMPMACWSCKSPDVPRMIEEQGEDGYFSGKWYKGGAEIVNTIGCSDCHEKGKSKLRISRPFAERGMEAIGTPFDKASRKDKQSMVCGQCHVEYYFEKTADKKGFVKFPWDKGTTVEDMEAYYDAIDFADWTHKVSKTPMLKAQHPGYETWQLGMHGKNNVSCTDCHMPKVKNAEGRKFTDHKVGNPFDRFEETCGNCHDQSKEFMVNLDKERKAKVKEIQLRAENQLVKAHFEAGAAWKAGATEAEMKPILTDIRHAQWRWDYAIASHGVASHAPDEALRVLGTAVDKAADARVKLAQLLAKKGVPQPIALPDISTKAKAQAALGMDMKKMNADKEEFKKTVLPKWDAEAKKREATY</sequence>
<gene>
    <name evidence="1" type="primary">nrfA</name>
    <name type="ordered locus">Swoo_0972</name>
</gene>
<comment type="function">
    <text evidence="1">Catalyzes the reduction of nitrite to ammonia, consuming six electrons in the process.</text>
</comment>
<comment type="catalytic activity">
    <reaction evidence="1">
        <text>6 Fe(III)-[cytochrome c] + NH4(+) + 2 H2O = 6 Fe(II)-[cytochrome c] + nitrite + 8 H(+)</text>
        <dbReference type="Rhea" id="RHEA:13089"/>
        <dbReference type="Rhea" id="RHEA-COMP:10350"/>
        <dbReference type="Rhea" id="RHEA-COMP:14399"/>
        <dbReference type="ChEBI" id="CHEBI:15377"/>
        <dbReference type="ChEBI" id="CHEBI:15378"/>
        <dbReference type="ChEBI" id="CHEBI:16301"/>
        <dbReference type="ChEBI" id="CHEBI:28938"/>
        <dbReference type="ChEBI" id="CHEBI:29033"/>
        <dbReference type="ChEBI" id="CHEBI:29034"/>
        <dbReference type="EC" id="1.7.2.2"/>
    </reaction>
</comment>
<comment type="cofactor">
    <cofactor evidence="1">
        <name>Ca(2+)</name>
        <dbReference type="ChEBI" id="CHEBI:29108"/>
    </cofactor>
    <text evidence="1">Binds 1 Ca(2+) ion per monomer.</text>
</comment>
<comment type="cofactor">
    <cofactor evidence="1">
        <name>heme c</name>
        <dbReference type="ChEBI" id="CHEBI:61717"/>
    </cofactor>
    <text evidence="1">Binds 5 heme c groups covalently per monomer.</text>
</comment>
<comment type="pathway">
    <text evidence="1">Nitrogen metabolism; nitrate reduction (assimilation).</text>
</comment>
<comment type="subcellular location">
    <subcellularLocation>
        <location evidence="1">Periplasm</location>
    </subcellularLocation>
</comment>
<comment type="similarity">
    <text evidence="1">Belongs to the cytochrome c-552 family.</text>
</comment>
<reference key="1">
    <citation type="submission" date="2008-02" db="EMBL/GenBank/DDBJ databases">
        <title>Complete sequence of Shewanella woodyi ATCC 51908.</title>
        <authorList>
            <consortium name="US DOE Joint Genome Institute"/>
            <person name="Copeland A."/>
            <person name="Lucas S."/>
            <person name="Lapidus A."/>
            <person name="Glavina del Rio T."/>
            <person name="Dalin E."/>
            <person name="Tice H."/>
            <person name="Bruce D."/>
            <person name="Goodwin L."/>
            <person name="Pitluck S."/>
            <person name="Sims D."/>
            <person name="Brettin T."/>
            <person name="Detter J.C."/>
            <person name="Han C."/>
            <person name="Kuske C.R."/>
            <person name="Schmutz J."/>
            <person name="Larimer F."/>
            <person name="Land M."/>
            <person name="Hauser L."/>
            <person name="Kyrpides N."/>
            <person name="Lykidis A."/>
            <person name="Zhao J.-S."/>
            <person name="Richardson P."/>
        </authorList>
    </citation>
    <scope>NUCLEOTIDE SEQUENCE [LARGE SCALE GENOMIC DNA]</scope>
    <source>
        <strain>ATCC 51908 / MS32</strain>
    </source>
</reference>